<feature type="signal peptide" evidence="2">
    <location>
        <begin position="1"/>
        <end position="21"/>
    </location>
</feature>
<feature type="chain" id="PRO_0000018341" description="Major outer membrane lipoprotein Lpp 3" evidence="2">
    <location>
        <begin position="22"/>
        <end position="79"/>
    </location>
</feature>
<feature type="repeat" evidence="2">
    <location>
        <begin position="25"/>
        <end position="35"/>
    </location>
</feature>
<feature type="repeat" evidence="2">
    <location>
        <begin position="39"/>
        <end position="49"/>
    </location>
</feature>
<feature type="coiled-coil region" evidence="2">
    <location>
        <begin position="28"/>
        <end position="76"/>
    </location>
</feature>
<feature type="modified residue" description="N6-murein peptidoglycan lysine" evidence="3">
    <location>
        <position position="79"/>
    </location>
</feature>
<feature type="lipid moiety-binding region" description="N-palmitoyl cysteine" evidence="2">
    <location>
        <position position="22"/>
    </location>
</feature>
<feature type="lipid moiety-binding region" description="S-diacylglycerol cysteine" evidence="2">
    <location>
        <position position="22"/>
    </location>
</feature>
<proteinExistence type="inferred from homology"/>
<comment type="function">
    <text evidence="2">A highly abundant outer membrane lipoprotein that controls the distance between the inner and outer membranes. The only protein known to be covalently linked to the peptidoglycan network (PGN). Also non-covalently binds the PGN. The link between the cell outer membrane and PGN contributes to maintenance of the structural and functional integrity of the cell envelope, and maintains the correct distance between the PGN and the outer membrane.</text>
</comment>
<comment type="subunit">
    <text evidence="2">Homotrimer.</text>
</comment>
<comment type="subcellular location">
    <subcellularLocation>
        <location evidence="2">Cell outer membrane</location>
        <topology evidence="2">Lipid-anchor</topology>
        <orientation evidence="2">Periplasmic side</orientation>
    </subcellularLocation>
    <subcellularLocation>
        <location evidence="2">Secreted</location>
        <location evidence="2">Cell wall</location>
        <topology evidence="2">Peptidoglycan-anchor</topology>
    </subcellularLocation>
    <text evidence="2">Attached via its lipidated N-terminus to the inner leaflet of the outer membrane. Attached to the peptidoglycan network (PGN) via its C-terminus.</text>
</comment>
<comment type="induction">
    <text evidence="1">This gene is probably poorly expressed.</text>
</comment>
<comment type="similarity">
    <text evidence="2">Belongs to the Lpp family.</text>
</comment>
<evidence type="ECO:0000250" key="1">
    <source>
        <dbReference type="UniProtKB" id="E8XH69"/>
    </source>
</evidence>
<evidence type="ECO:0000255" key="2">
    <source>
        <dbReference type="HAMAP-Rule" id="MF_00843"/>
    </source>
</evidence>
<evidence type="ECO:0000305" key="3"/>
<name>LPP3_SALPA</name>
<dbReference type="EMBL" id="CP000026">
    <property type="protein sequence ID" value="AAV77415.1"/>
    <property type="molecule type" value="Genomic_DNA"/>
</dbReference>
<dbReference type="RefSeq" id="WP_001082323.1">
    <property type="nucleotide sequence ID" value="NC_006511.1"/>
</dbReference>
<dbReference type="SMR" id="Q5PH62"/>
<dbReference type="KEGG" id="spt:SPA1478"/>
<dbReference type="HOGENOM" id="CLU_166934_2_1_6"/>
<dbReference type="Proteomes" id="UP000008185">
    <property type="component" value="Chromosome"/>
</dbReference>
<dbReference type="GO" id="GO:0009279">
    <property type="term" value="C:cell outer membrane"/>
    <property type="evidence" value="ECO:0007669"/>
    <property type="project" value="UniProtKB-SubCell"/>
</dbReference>
<dbReference type="GO" id="GO:0005576">
    <property type="term" value="C:extracellular region"/>
    <property type="evidence" value="ECO:0007669"/>
    <property type="project" value="UniProtKB-KW"/>
</dbReference>
<dbReference type="GO" id="GO:0008289">
    <property type="term" value="F:lipid binding"/>
    <property type="evidence" value="ECO:0007669"/>
    <property type="project" value="UniProtKB-UniRule"/>
</dbReference>
<dbReference type="GO" id="GO:0042834">
    <property type="term" value="F:peptidoglycan binding"/>
    <property type="evidence" value="ECO:0007669"/>
    <property type="project" value="UniProtKB-UniRule"/>
</dbReference>
<dbReference type="GO" id="GO:0030258">
    <property type="term" value="P:lipid modification"/>
    <property type="evidence" value="ECO:0007669"/>
    <property type="project" value="UniProtKB-UniRule"/>
</dbReference>
<dbReference type="GO" id="GO:0043580">
    <property type="term" value="P:periplasmic space organization"/>
    <property type="evidence" value="ECO:0007669"/>
    <property type="project" value="UniProtKB-UniRule"/>
</dbReference>
<dbReference type="FunFam" id="1.20.5.190:FF:000002">
    <property type="entry name" value="Major outer membrane lipoprotein"/>
    <property type="match status" value="1"/>
</dbReference>
<dbReference type="Gene3D" id="1.20.5.190">
    <property type="match status" value="1"/>
</dbReference>
<dbReference type="HAMAP" id="MF_00843">
    <property type="entry name" value="Lpp"/>
    <property type="match status" value="1"/>
</dbReference>
<dbReference type="InterPro" id="IPR006817">
    <property type="entry name" value="Lipoprotein_leucine-zipper_dom"/>
</dbReference>
<dbReference type="InterPro" id="IPR016367">
    <property type="entry name" value="MOM_Lpp"/>
</dbReference>
<dbReference type="NCBIfam" id="NF040598">
    <property type="entry name" value="Ala_zip_lipo"/>
    <property type="match status" value="1"/>
</dbReference>
<dbReference type="NCBIfam" id="NF011925">
    <property type="entry name" value="PRK15396.1"/>
    <property type="match status" value="1"/>
</dbReference>
<dbReference type="PANTHER" id="PTHR38763:SF1">
    <property type="entry name" value="MAJOR OUTER MEMBRANE LIPOPROTEIN LPP"/>
    <property type="match status" value="1"/>
</dbReference>
<dbReference type="PANTHER" id="PTHR38763">
    <property type="entry name" value="MAJOR OUTER MEMBRANE PROLIPOPROTEIN LPP"/>
    <property type="match status" value="1"/>
</dbReference>
<dbReference type="Pfam" id="PF04728">
    <property type="entry name" value="LPP"/>
    <property type="match status" value="1"/>
</dbReference>
<dbReference type="PIRSF" id="PIRSF002855">
    <property type="entry name" value="Murein-lipoprotein"/>
    <property type="match status" value="1"/>
</dbReference>
<dbReference type="SUPFAM" id="SSF58042">
    <property type="entry name" value="Outer membrane lipoprotein"/>
    <property type="match status" value="1"/>
</dbReference>
<dbReference type="PROSITE" id="PS51257">
    <property type="entry name" value="PROKAR_LIPOPROTEIN"/>
    <property type="match status" value="1"/>
</dbReference>
<protein>
    <recommendedName>
        <fullName evidence="2">Major outer membrane lipoprotein Lpp 3</fullName>
    </recommendedName>
    <alternativeName>
        <fullName evidence="2">Braun lipoprotein 3</fullName>
        <shortName evidence="2">BLP 3</shortName>
    </alternativeName>
    <alternativeName>
        <fullName evidence="2">Murein lipoprotein 3</fullName>
    </alternativeName>
</protein>
<accession>Q5PH62</accession>
<organism>
    <name type="scientific">Salmonella paratyphi A (strain ATCC 9150 / SARB42)</name>
    <dbReference type="NCBI Taxonomy" id="295319"/>
    <lineage>
        <taxon>Bacteria</taxon>
        <taxon>Pseudomonadati</taxon>
        <taxon>Pseudomonadota</taxon>
        <taxon>Gammaproteobacteria</taxon>
        <taxon>Enterobacterales</taxon>
        <taxon>Enterobacteriaceae</taxon>
        <taxon>Salmonella</taxon>
    </lineage>
</organism>
<sequence length="79" mass="8414">MNRTNKLILGAVVLGSALLAGCSSNAKIDQLSSDVQTLSAKVDQLSNDVNAMRSDVQAAKDDAARANQRLDNKVLRICK</sequence>
<gene>
    <name evidence="2" type="primary">lpp3</name>
    <name type="synonym">lppB</name>
    <name type="ordered locus">SPA1478</name>
</gene>
<keyword id="KW-0998">Cell outer membrane</keyword>
<keyword id="KW-0134">Cell wall</keyword>
<keyword id="KW-0175">Coiled coil</keyword>
<keyword id="KW-0449">Lipoprotein</keyword>
<keyword id="KW-0472">Membrane</keyword>
<keyword id="KW-0564">Palmitate</keyword>
<keyword id="KW-0572">Peptidoglycan-anchor</keyword>
<keyword id="KW-0677">Repeat</keyword>
<keyword id="KW-0964">Secreted</keyword>
<keyword id="KW-0732">Signal</keyword>
<reference key="1">
    <citation type="journal article" date="2004" name="Nat. Genet.">
        <title>Comparison of genome degradation in Paratyphi A and Typhi, human-restricted serovars of Salmonella enterica that cause typhoid.</title>
        <authorList>
            <person name="McClelland M."/>
            <person name="Sanderson K.E."/>
            <person name="Clifton S.W."/>
            <person name="Latreille P."/>
            <person name="Porwollik S."/>
            <person name="Sabo A."/>
            <person name="Meyer R."/>
            <person name="Bieri T."/>
            <person name="Ozersky P."/>
            <person name="McLellan M."/>
            <person name="Harkins C.R."/>
            <person name="Wang C."/>
            <person name="Nguyen C."/>
            <person name="Berghoff A."/>
            <person name="Elliott G."/>
            <person name="Kohlberg S."/>
            <person name="Strong C."/>
            <person name="Du F."/>
            <person name="Carter J."/>
            <person name="Kremizki C."/>
            <person name="Layman D."/>
            <person name="Leonard S."/>
            <person name="Sun H."/>
            <person name="Fulton L."/>
            <person name="Nash W."/>
            <person name="Miner T."/>
            <person name="Minx P."/>
            <person name="Delehaunty K."/>
            <person name="Fronick C."/>
            <person name="Magrini V."/>
            <person name="Nhan M."/>
            <person name="Warren W."/>
            <person name="Florea L."/>
            <person name="Spieth J."/>
            <person name="Wilson R.K."/>
        </authorList>
    </citation>
    <scope>NUCLEOTIDE SEQUENCE [LARGE SCALE GENOMIC DNA]</scope>
    <source>
        <strain>ATCC 9150 / SARB42</strain>
    </source>
</reference>